<organism>
    <name type="scientific">Ammotragus lervia</name>
    <name type="common">Barbary sheep</name>
    <name type="synonym">Antilope lervia</name>
    <dbReference type="NCBI Taxonomy" id="9899"/>
    <lineage>
        <taxon>Eukaryota</taxon>
        <taxon>Metazoa</taxon>
        <taxon>Chordata</taxon>
        <taxon>Craniata</taxon>
        <taxon>Vertebrata</taxon>
        <taxon>Euteleostomi</taxon>
        <taxon>Mammalia</taxon>
        <taxon>Eutheria</taxon>
        <taxon>Laurasiatheria</taxon>
        <taxon>Artiodactyla</taxon>
        <taxon>Ruminantia</taxon>
        <taxon>Pecora</taxon>
        <taxon>Bovidae</taxon>
        <taxon>Caprinae</taxon>
        <taxon>Ammotragus</taxon>
    </lineage>
</organism>
<proteinExistence type="evidence at protein level"/>
<accession>P68058</accession>
<accession>P02079</accession>
<evidence type="ECO:0000255" key="1">
    <source>
        <dbReference type="PROSITE-ProRule" id="PRU00238"/>
    </source>
</evidence>
<reference key="1">
    <citation type="journal article" date="1970" name="Biochem. Genet.">
        <title>Production of hemoglobin C in the Moufflon (Ovis musimon Pallas, 1811) and the Barbary sheep (Ammotragus lervia Pallas, 1777) during experimental anemia: amino acid composition of tryptic peptides from the beta B and beta C chains.</title>
        <authorList>
            <person name="Wilson J.B."/>
            <person name="Miller A."/>
            <person name="Huisman T.H.J."/>
        </authorList>
    </citation>
    <scope>PARTIAL PROTEIN SEQUENCE</scope>
    <scope>AMINO-ACID COMPOSITION OF TRYPTIC PEPTIDES</scope>
</reference>
<dbReference type="PIR" id="B90232">
    <property type="entry name" value="HBSHCR"/>
</dbReference>
<dbReference type="GO" id="GO:0072562">
    <property type="term" value="C:blood microparticle"/>
    <property type="evidence" value="ECO:0007669"/>
    <property type="project" value="TreeGrafter"/>
</dbReference>
<dbReference type="GO" id="GO:0031838">
    <property type="term" value="C:haptoglobin-hemoglobin complex"/>
    <property type="evidence" value="ECO:0007669"/>
    <property type="project" value="TreeGrafter"/>
</dbReference>
<dbReference type="GO" id="GO:0005833">
    <property type="term" value="C:hemoglobin complex"/>
    <property type="evidence" value="ECO:0007669"/>
    <property type="project" value="InterPro"/>
</dbReference>
<dbReference type="GO" id="GO:0031720">
    <property type="term" value="F:haptoglobin binding"/>
    <property type="evidence" value="ECO:0007669"/>
    <property type="project" value="TreeGrafter"/>
</dbReference>
<dbReference type="GO" id="GO:0020037">
    <property type="term" value="F:heme binding"/>
    <property type="evidence" value="ECO:0007669"/>
    <property type="project" value="InterPro"/>
</dbReference>
<dbReference type="GO" id="GO:0031721">
    <property type="term" value="F:hemoglobin alpha binding"/>
    <property type="evidence" value="ECO:0007669"/>
    <property type="project" value="TreeGrafter"/>
</dbReference>
<dbReference type="GO" id="GO:0046872">
    <property type="term" value="F:metal ion binding"/>
    <property type="evidence" value="ECO:0007669"/>
    <property type="project" value="UniProtKB-KW"/>
</dbReference>
<dbReference type="GO" id="GO:0043177">
    <property type="term" value="F:organic acid binding"/>
    <property type="evidence" value="ECO:0007669"/>
    <property type="project" value="TreeGrafter"/>
</dbReference>
<dbReference type="GO" id="GO:0019825">
    <property type="term" value="F:oxygen binding"/>
    <property type="evidence" value="ECO:0007669"/>
    <property type="project" value="InterPro"/>
</dbReference>
<dbReference type="GO" id="GO:0005344">
    <property type="term" value="F:oxygen carrier activity"/>
    <property type="evidence" value="ECO:0007669"/>
    <property type="project" value="UniProtKB-KW"/>
</dbReference>
<dbReference type="GO" id="GO:0004601">
    <property type="term" value="F:peroxidase activity"/>
    <property type="evidence" value="ECO:0007669"/>
    <property type="project" value="TreeGrafter"/>
</dbReference>
<dbReference type="GO" id="GO:0042744">
    <property type="term" value="P:hydrogen peroxide catabolic process"/>
    <property type="evidence" value="ECO:0007669"/>
    <property type="project" value="TreeGrafter"/>
</dbReference>
<dbReference type="CDD" id="cd08925">
    <property type="entry name" value="Hb-beta-like"/>
    <property type="match status" value="1"/>
</dbReference>
<dbReference type="FunFam" id="1.10.490.10:FF:000001">
    <property type="entry name" value="Hemoglobin subunit beta"/>
    <property type="match status" value="1"/>
</dbReference>
<dbReference type="Gene3D" id="1.10.490.10">
    <property type="entry name" value="Globins"/>
    <property type="match status" value="1"/>
</dbReference>
<dbReference type="InterPro" id="IPR000971">
    <property type="entry name" value="Globin"/>
</dbReference>
<dbReference type="InterPro" id="IPR009050">
    <property type="entry name" value="Globin-like_sf"/>
</dbReference>
<dbReference type="InterPro" id="IPR012292">
    <property type="entry name" value="Globin/Proto"/>
</dbReference>
<dbReference type="InterPro" id="IPR002337">
    <property type="entry name" value="Hemoglobin_b"/>
</dbReference>
<dbReference type="InterPro" id="IPR050056">
    <property type="entry name" value="Hemoglobin_oxygen_transport"/>
</dbReference>
<dbReference type="PANTHER" id="PTHR11442">
    <property type="entry name" value="HEMOGLOBIN FAMILY MEMBER"/>
    <property type="match status" value="1"/>
</dbReference>
<dbReference type="PANTHER" id="PTHR11442:SF42">
    <property type="entry name" value="HEMOGLOBIN SUBUNIT BETA"/>
    <property type="match status" value="1"/>
</dbReference>
<dbReference type="Pfam" id="PF00042">
    <property type="entry name" value="Globin"/>
    <property type="match status" value="1"/>
</dbReference>
<dbReference type="PRINTS" id="PR00814">
    <property type="entry name" value="BETAHAEM"/>
</dbReference>
<dbReference type="SUPFAM" id="SSF46458">
    <property type="entry name" value="Globin-like"/>
    <property type="match status" value="1"/>
</dbReference>
<dbReference type="PROSITE" id="PS01033">
    <property type="entry name" value="GLOBIN"/>
    <property type="match status" value="1"/>
</dbReference>
<sequence length="141" mass="15634">PNKALITGFWSKVKVDEVGAEALGRLLVVYPWTQRFFEHFGDLSTADAVLGNAKVKAHGKKVLDSFSZGVQHLDDLKGTFAQLSELHCDKLHVDPENFRLLGNVLVVVLARHFGKEFTPELQAEFQKVVAGVASALAHRYH</sequence>
<protein>
    <recommendedName>
        <fullName>Hemoglobin subunit beta-C</fullName>
    </recommendedName>
    <alternativeName>
        <fullName>Beta-C-globin</fullName>
    </alternativeName>
    <alternativeName>
        <fullName>Hemoglobin beta-C chain</fullName>
    </alternativeName>
</protein>
<comment type="function">
    <text>Involved in oxygen transport from the lung to the various peripheral tissues.</text>
</comment>
<comment type="subunit">
    <text>Heterotetramer of two alpha chains and two beta chains.</text>
</comment>
<comment type="tissue specificity">
    <text>Red blood cells.</text>
</comment>
<comment type="miscellaneous">
    <text>This type of beta-C chain is found in these animals when anemia has been experimentally produced.</text>
</comment>
<comment type="similarity">
    <text evidence="1">Belongs to the globin family.</text>
</comment>
<feature type="chain" id="PRO_0000052864" description="Hemoglobin subunit beta-C">
    <location>
        <begin position="1"/>
        <end position="141"/>
    </location>
</feature>
<feature type="domain" description="Globin" evidence="1">
    <location>
        <begin position="1"/>
        <end position="141"/>
    </location>
</feature>
<feature type="binding site" description="distal binding residue">
    <location>
        <position position="58"/>
    </location>
    <ligand>
        <name>heme b</name>
        <dbReference type="ChEBI" id="CHEBI:60344"/>
    </ligand>
    <ligandPart>
        <name>Fe</name>
        <dbReference type="ChEBI" id="CHEBI:18248"/>
    </ligandPart>
</feature>
<feature type="binding site" description="proximal binding residue">
    <location>
        <position position="87"/>
    </location>
    <ligand>
        <name>heme b</name>
        <dbReference type="ChEBI" id="CHEBI:60344"/>
    </ligand>
    <ligandPart>
        <name>Fe</name>
        <dbReference type="ChEBI" id="CHEBI:18248"/>
    </ligandPart>
</feature>
<feature type="unsure residue">
    <location>
        <position position="64"/>
    </location>
</feature>
<feature type="unsure residue">
    <location>
        <position position="71"/>
    </location>
</feature>
<feature type="unsure residue">
    <location>
        <begin position="74"/>
        <end position="75"/>
    </location>
</feature>
<feature type="unsure residue">
    <location>
        <position position="82"/>
    </location>
</feature>
<feature type="unsure residue">
    <location>
        <position position="85"/>
    </location>
</feature>
<feature type="unsure residue">
    <location>
        <position position="94"/>
    </location>
</feature>
<feature type="unsure residue">
    <location>
        <begin position="96"/>
        <end position="97"/>
    </location>
</feature>
<feature type="unsure residue">
    <location>
        <position position="103"/>
    </location>
</feature>
<keyword id="KW-0903">Direct protein sequencing</keyword>
<keyword id="KW-0349">Heme</keyword>
<keyword id="KW-0408">Iron</keyword>
<keyword id="KW-0479">Metal-binding</keyword>
<keyword id="KW-0561">Oxygen transport</keyword>
<keyword id="KW-0813">Transport</keyword>
<name>HBBC_AMMLE</name>